<comment type="subcellular location">
    <subcellularLocation>
        <location evidence="3">Nucleus</location>
    </subcellularLocation>
</comment>
<feature type="chain" id="PRO_0000046901" description="Putative zinc finger protein ZK686.5">
    <location>
        <begin position="1"/>
        <end position="202"/>
    </location>
</feature>
<feature type="zinc finger region" description="C2H2-type 1" evidence="1">
    <location>
        <begin position="110"/>
        <end position="133"/>
    </location>
</feature>
<feature type="zinc finger region" description="C2H2-type 2" evidence="1">
    <location>
        <begin position="138"/>
        <end position="160"/>
    </location>
</feature>
<feature type="zinc finger region" description="C2H2-type 3" evidence="1">
    <location>
        <begin position="169"/>
        <end position="192"/>
    </location>
</feature>
<feature type="region of interest" description="Disordered" evidence="2">
    <location>
        <begin position="43"/>
        <end position="63"/>
    </location>
</feature>
<sequence length="202" mass="23352">MPDFTIIQPDRKFDAAAVAGIFVRSSTSSSFPSASSYIAAKKRKNVDNTSTRKPYSYKDRKRKNTEEIRNIKKKLFMDLGIVRTNCGIDNEKQDREKAMKRKVTETIVTTYCELCEQNFSSSKMLLLHRGKVHNTPYIECHLCMKLFSQTIQFNRHMKTHYGPNAKIYVQCELCDRQFKDKQSLRTHWDVSHGSGDNQAVLA</sequence>
<organism>
    <name type="scientific">Caenorhabditis elegans</name>
    <dbReference type="NCBI Taxonomy" id="6239"/>
    <lineage>
        <taxon>Eukaryota</taxon>
        <taxon>Metazoa</taxon>
        <taxon>Ecdysozoa</taxon>
        <taxon>Nematoda</taxon>
        <taxon>Chromadorea</taxon>
        <taxon>Rhabditida</taxon>
        <taxon>Rhabditina</taxon>
        <taxon>Rhabditomorpha</taxon>
        <taxon>Rhabditoidea</taxon>
        <taxon>Rhabditidae</taxon>
        <taxon>Peloderinae</taxon>
        <taxon>Caenorhabditis</taxon>
    </lineage>
</organism>
<evidence type="ECO:0000255" key="1">
    <source>
        <dbReference type="PROSITE-ProRule" id="PRU00042"/>
    </source>
</evidence>
<evidence type="ECO:0000256" key="2">
    <source>
        <dbReference type="SAM" id="MobiDB-lite"/>
    </source>
</evidence>
<evidence type="ECO:0000305" key="3"/>
<name>YO15_CAEEL</name>
<keyword id="KW-0238">DNA-binding</keyword>
<keyword id="KW-0479">Metal-binding</keyword>
<keyword id="KW-0539">Nucleus</keyword>
<keyword id="KW-1185">Reference proteome</keyword>
<keyword id="KW-0677">Repeat</keyword>
<keyword id="KW-0862">Zinc</keyword>
<keyword id="KW-0863">Zinc-finger</keyword>
<protein>
    <recommendedName>
        <fullName>Putative zinc finger protein ZK686.5</fullName>
    </recommendedName>
</protein>
<dbReference type="EMBL" id="FO080431">
    <property type="protein sequence ID" value="CCD63649.1"/>
    <property type="molecule type" value="Genomic_DNA"/>
</dbReference>
<dbReference type="RefSeq" id="NP_001023030.2">
    <property type="nucleotide sequence ID" value="NM_001027859.2"/>
</dbReference>
<dbReference type="SMR" id="Q7Z142"/>
<dbReference type="BioGRID" id="532478">
    <property type="interactions" value="1"/>
</dbReference>
<dbReference type="FunCoup" id="Q7Z142">
    <property type="interactions" value="205"/>
</dbReference>
<dbReference type="STRING" id="6239.ZK686.5.1"/>
<dbReference type="PaxDb" id="6239-ZK686.5"/>
<dbReference type="EnsemblMetazoa" id="ZK686.5.1">
    <property type="protein sequence ID" value="ZK686.5.1"/>
    <property type="gene ID" value="WBGene00022795"/>
</dbReference>
<dbReference type="GeneID" id="3565160"/>
<dbReference type="KEGG" id="cel:CELE_ZK686.5"/>
<dbReference type="UCSC" id="ZK686.5">
    <property type="organism name" value="c. elegans"/>
</dbReference>
<dbReference type="AGR" id="WB:WBGene00022795"/>
<dbReference type="CTD" id="3565160"/>
<dbReference type="WormBase" id="ZK686.5">
    <property type="protein sequence ID" value="CE50316"/>
    <property type="gene ID" value="WBGene00022795"/>
</dbReference>
<dbReference type="eggNOG" id="KOG0350">
    <property type="taxonomic scope" value="Eukaryota"/>
</dbReference>
<dbReference type="GeneTree" id="ENSGT00940000169568"/>
<dbReference type="HOGENOM" id="CLU_1355742_0_0_1"/>
<dbReference type="InParanoid" id="Q7Z142"/>
<dbReference type="OrthoDB" id="10039931at2759"/>
<dbReference type="PhylomeDB" id="Q7Z142"/>
<dbReference type="PRO" id="PR:Q7Z142"/>
<dbReference type="Proteomes" id="UP000001940">
    <property type="component" value="Chromosome III"/>
</dbReference>
<dbReference type="Bgee" id="WBGene00022795">
    <property type="expression patterns" value="Expressed in adult organism and 2 other cell types or tissues"/>
</dbReference>
<dbReference type="GO" id="GO:0005634">
    <property type="term" value="C:nucleus"/>
    <property type="evidence" value="ECO:0007669"/>
    <property type="project" value="UniProtKB-SubCell"/>
</dbReference>
<dbReference type="GO" id="GO:0003677">
    <property type="term" value="F:DNA binding"/>
    <property type="evidence" value="ECO:0007669"/>
    <property type="project" value="UniProtKB-KW"/>
</dbReference>
<dbReference type="GO" id="GO:0008270">
    <property type="term" value="F:zinc ion binding"/>
    <property type="evidence" value="ECO:0007669"/>
    <property type="project" value="UniProtKB-KW"/>
</dbReference>
<dbReference type="Gene3D" id="3.30.160.60">
    <property type="entry name" value="Classic Zinc Finger"/>
    <property type="match status" value="1"/>
</dbReference>
<dbReference type="InterPro" id="IPR050589">
    <property type="entry name" value="Ikaros_C2H2-ZF"/>
</dbReference>
<dbReference type="InterPro" id="IPR036236">
    <property type="entry name" value="Znf_C2H2_sf"/>
</dbReference>
<dbReference type="InterPro" id="IPR013087">
    <property type="entry name" value="Znf_C2H2_type"/>
</dbReference>
<dbReference type="PANTHER" id="PTHR24404:SF114">
    <property type="entry name" value="KLUMPFUSS, ISOFORM B-RELATED"/>
    <property type="match status" value="1"/>
</dbReference>
<dbReference type="PANTHER" id="PTHR24404">
    <property type="entry name" value="ZINC FINGER PROTEIN"/>
    <property type="match status" value="1"/>
</dbReference>
<dbReference type="Pfam" id="PF13894">
    <property type="entry name" value="zf-C2H2_4"/>
    <property type="match status" value="1"/>
</dbReference>
<dbReference type="Pfam" id="PF12874">
    <property type="entry name" value="zf-met"/>
    <property type="match status" value="1"/>
</dbReference>
<dbReference type="SMART" id="SM00355">
    <property type="entry name" value="ZnF_C2H2"/>
    <property type="match status" value="3"/>
</dbReference>
<dbReference type="SUPFAM" id="SSF57667">
    <property type="entry name" value="beta-beta-alpha zinc fingers"/>
    <property type="match status" value="2"/>
</dbReference>
<dbReference type="PROSITE" id="PS00028">
    <property type="entry name" value="ZINC_FINGER_C2H2_1"/>
    <property type="match status" value="3"/>
</dbReference>
<dbReference type="PROSITE" id="PS50157">
    <property type="entry name" value="ZINC_FINGER_C2H2_2"/>
    <property type="match status" value="2"/>
</dbReference>
<gene>
    <name type="ORF">ZK686.5</name>
</gene>
<accession>Q7Z142</accession>
<proteinExistence type="predicted"/>
<reference key="1">
    <citation type="journal article" date="1994" name="Nature">
        <title>2.2 Mb of contiguous nucleotide sequence from chromosome III of C. elegans.</title>
        <authorList>
            <person name="Wilson R."/>
            <person name="Ainscough R."/>
            <person name="Anderson K."/>
            <person name="Baynes C."/>
            <person name="Berks M."/>
            <person name="Bonfield J."/>
            <person name="Burton J."/>
            <person name="Connell M."/>
            <person name="Copsey T."/>
            <person name="Cooper J."/>
            <person name="Coulson A."/>
            <person name="Craxton M."/>
            <person name="Dear S."/>
            <person name="Du Z."/>
            <person name="Durbin R."/>
            <person name="Favello A."/>
            <person name="Fraser A."/>
            <person name="Fulton L."/>
            <person name="Gardner A."/>
            <person name="Green P."/>
            <person name="Hawkins T."/>
            <person name="Hillier L."/>
            <person name="Jier M."/>
            <person name="Johnston L."/>
            <person name="Jones M."/>
            <person name="Kershaw J."/>
            <person name="Kirsten J."/>
            <person name="Laisster N."/>
            <person name="Latreille P."/>
            <person name="Lightning J."/>
            <person name="Lloyd C."/>
            <person name="Mortimore B."/>
            <person name="O'Callaghan M."/>
            <person name="Parsons J."/>
            <person name="Percy C."/>
            <person name="Rifken L."/>
            <person name="Roopra A."/>
            <person name="Saunders D."/>
            <person name="Shownkeen R."/>
            <person name="Sims M."/>
            <person name="Smaldon N."/>
            <person name="Smith A."/>
            <person name="Smith M."/>
            <person name="Sonnhammer E."/>
            <person name="Staden R."/>
            <person name="Sulston J."/>
            <person name="Thierry-Mieg J."/>
            <person name="Thomas K."/>
            <person name="Vaudin M."/>
            <person name="Vaughan K."/>
            <person name="Waterston R."/>
            <person name="Watson A."/>
            <person name="Weinstock L."/>
            <person name="Wilkinson-Sproat J."/>
            <person name="Wohldman P."/>
        </authorList>
    </citation>
    <scope>NUCLEOTIDE SEQUENCE [LARGE SCALE GENOMIC DNA]</scope>
    <source>
        <strain>Bristol N2</strain>
    </source>
</reference>
<reference key="2">
    <citation type="journal article" date="1998" name="Science">
        <title>Genome sequence of the nematode C. elegans: a platform for investigating biology.</title>
        <authorList>
            <consortium name="The C. elegans sequencing consortium"/>
        </authorList>
    </citation>
    <scope>NUCLEOTIDE SEQUENCE [LARGE SCALE GENOMIC DNA]</scope>
    <source>
        <strain>Bristol N2</strain>
    </source>
</reference>